<organism>
    <name type="scientific">Anoxybacillus flavithermus (strain DSM 21510 / WK1)</name>
    <dbReference type="NCBI Taxonomy" id="491915"/>
    <lineage>
        <taxon>Bacteria</taxon>
        <taxon>Bacillati</taxon>
        <taxon>Bacillota</taxon>
        <taxon>Bacilli</taxon>
        <taxon>Bacillales</taxon>
        <taxon>Anoxybacillaceae</taxon>
        <taxon>Anoxybacillus</taxon>
    </lineage>
</organism>
<evidence type="ECO:0000255" key="1">
    <source>
        <dbReference type="HAMAP-Rule" id="MF_00228"/>
    </source>
</evidence>
<accession>B7GKQ7</accession>
<protein>
    <recommendedName>
        <fullName evidence="1">Hydroxyethylthiazole kinase</fullName>
        <ecNumber evidence="1">2.7.1.50</ecNumber>
    </recommendedName>
    <alternativeName>
        <fullName evidence="1">4-methyl-5-beta-hydroxyethylthiazole kinase</fullName>
        <shortName evidence="1">TH kinase</shortName>
        <shortName evidence="1">Thz kinase</shortName>
    </alternativeName>
</protein>
<proteinExistence type="inferred from homology"/>
<name>THIM_ANOFW</name>
<dbReference type="EC" id="2.7.1.50" evidence="1"/>
<dbReference type="EMBL" id="CP000922">
    <property type="protein sequence ID" value="ACJ33713.1"/>
    <property type="molecule type" value="Genomic_DNA"/>
</dbReference>
<dbReference type="RefSeq" id="WP_012574962.1">
    <property type="nucleotide sequence ID" value="NC_011567.1"/>
</dbReference>
<dbReference type="SMR" id="B7GKQ7"/>
<dbReference type="STRING" id="491915.Aflv_1345"/>
<dbReference type="GeneID" id="7037598"/>
<dbReference type="KEGG" id="afl:Aflv_1345"/>
<dbReference type="eggNOG" id="COG2145">
    <property type="taxonomic scope" value="Bacteria"/>
</dbReference>
<dbReference type="HOGENOM" id="CLU_019943_0_1_9"/>
<dbReference type="UniPathway" id="UPA00060">
    <property type="reaction ID" value="UER00139"/>
</dbReference>
<dbReference type="Proteomes" id="UP000000742">
    <property type="component" value="Chromosome"/>
</dbReference>
<dbReference type="GO" id="GO:0005524">
    <property type="term" value="F:ATP binding"/>
    <property type="evidence" value="ECO:0007669"/>
    <property type="project" value="UniProtKB-UniRule"/>
</dbReference>
<dbReference type="GO" id="GO:0004417">
    <property type="term" value="F:hydroxyethylthiazole kinase activity"/>
    <property type="evidence" value="ECO:0007669"/>
    <property type="project" value="UniProtKB-UniRule"/>
</dbReference>
<dbReference type="GO" id="GO:0000287">
    <property type="term" value="F:magnesium ion binding"/>
    <property type="evidence" value="ECO:0007669"/>
    <property type="project" value="UniProtKB-UniRule"/>
</dbReference>
<dbReference type="GO" id="GO:0009228">
    <property type="term" value="P:thiamine biosynthetic process"/>
    <property type="evidence" value="ECO:0007669"/>
    <property type="project" value="UniProtKB-KW"/>
</dbReference>
<dbReference type="GO" id="GO:0009229">
    <property type="term" value="P:thiamine diphosphate biosynthetic process"/>
    <property type="evidence" value="ECO:0007669"/>
    <property type="project" value="UniProtKB-UniRule"/>
</dbReference>
<dbReference type="CDD" id="cd01170">
    <property type="entry name" value="THZ_kinase"/>
    <property type="match status" value="1"/>
</dbReference>
<dbReference type="Gene3D" id="3.40.1190.20">
    <property type="match status" value="1"/>
</dbReference>
<dbReference type="HAMAP" id="MF_00228">
    <property type="entry name" value="Thz_kinase"/>
    <property type="match status" value="1"/>
</dbReference>
<dbReference type="InterPro" id="IPR000417">
    <property type="entry name" value="Hyethyz_kinase"/>
</dbReference>
<dbReference type="InterPro" id="IPR029056">
    <property type="entry name" value="Ribokinase-like"/>
</dbReference>
<dbReference type="NCBIfam" id="NF006830">
    <property type="entry name" value="PRK09355.1"/>
    <property type="match status" value="1"/>
</dbReference>
<dbReference type="NCBIfam" id="TIGR00694">
    <property type="entry name" value="thiM"/>
    <property type="match status" value="1"/>
</dbReference>
<dbReference type="Pfam" id="PF02110">
    <property type="entry name" value="HK"/>
    <property type="match status" value="1"/>
</dbReference>
<dbReference type="PIRSF" id="PIRSF000513">
    <property type="entry name" value="Thz_kinase"/>
    <property type="match status" value="1"/>
</dbReference>
<dbReference type="PRINTS" id="PR01099">
    <property type="entry name" value="HYETHTZKNASE"/>
</dbReference>
<dbReference type="SUPFAM" id="SSF53613">
    <property type="entry name" value="Ribokinase-like"/>
    <property type="match status" value="1"/>
</dbReference>
<sequence>MMNVGQWLTRVRKESPLVHNMTNVVVTNFVANGLLAVGASPVMAYAKEEVADMVRLARALVLNIGTLNETDVEAMLIAGKAANEANIPVIFDPVGAGATAYRTETARRILREVNISILRGNASEIASIAGEQVRTKGVDAGDVQSDLVDVAKKAAHMFRCVVVITGKDDIVTDGERIVIVSNGDAMLTKVTGTGCLLSSVLGAFAGVGEDVMTSSVAALAYYGVAAEKAATQAKAPGSFQLSFLNALHETSAEEVDQYARIQGE</sequence>
<feature type="chain" id="PRO_0000383820" description="Hydroxyethylthiazole kinase">
    <location>
        <begin position="1"/>
        <end position="264"/>
    </location>
</feature>
<feature type="binding site" evidence="1">
    <location>
        <position position="43"/>
    </location>
    <ligand>
        <name>substrate</name>
    </ligand>
</feature>
<feature type="binding site" evidence="1">
    <location>
        <position position="119"/>
    </location>
    <ligand>
        <name>ATP</name>
        <dbReference type="ChEBI" id="CHEBI:30616"/>
    </ligand>
</feature>
<feature type="binding site" evidence="1">
    <location>
        <position position="165"/>
    </location>
    <ligand>
        <name>ATP</name>
        <dbReference type="ChEBI" id="CHEBI:30616"/>
    </ligand>
</feature>
<feature type="binding site" evidence="1">
    <location>
        <position position="192"/>
    </location>
    <ligand>
        <name>substrate</name>
    </ligand>
</feature>
<comment type="function">
    <text evidence="1">Catalyzes the phosphorylation of the hydroxyl group of 4-methyl-5-beta-hydroxyethylthiazole (THZ).</text>
</comment>
<comment type="catalytic activity">
    <reaction evidence="1">
        <text>5-(2-hydroxyethyl)-4-methylthiazole + ATP = 4-methyl-5-(2-phosphooxyethyl)-thiazole + ADP + H(+)</text>
        <dbReference type="Rhea" id="RHEA:24212"/>
        <dbReference type="ChEBI" id="CHEBI:15378"/>
        <dbReference type="ChEBI" id="CHEBI:17957"/>
        <dbReference type="ChEBI" id="CHEBI:30616"/>
        <dbReference type="ChEBI" id="CHEBI:58296"/>
        <dbReference type="ChEBI" id="CHEBI:456216"/>
        <dbReference type="EC" id="2.7.1.50"/>
    </reaction>
</comment>
<comment type="cofactor">
    <cofactor evidence="1">
        <name>Mg(2+)</name>
        <dbReference type="ChEBI" id="CHEBI:18420"/>
    </cofactor>
</comment>
<comment type="pathway">
    <text evidence="1">Cofactor biosynthesis; thiamine diphosphate biosynthesis; 4-methyl-5-(2-phosphoethyl)-thiazole from 5-(2-hydroxyethyl)-4-methylthiazole: step 1/1.</text>
</comment>
<comment type="similarity">
    <text evidence="1">Belongs to the Thz kinase family.</text>
</comment>
<gene>
    <name evidence="1" type="primary">thiM</name>
    <name type="ordered locus">Aflv_1345</name>
</gene>
<reference key="1">
    <citation type="journal article" date="2008" name="Genome Biol.">
        <title>Encapsulated in silica: genome, proteome and physiology of the thermophilic bacterium Anoxybacillus flavithermus WK1.</title>
        <authorList>
            <person name="Saw J.H."/>
            <person name="Mountain B.W."/>
            <person name="Feng L."/>
            <person name="Omelchenko M.V."/>
            <person name="Hou S."/>
            <person name="Saito J.A."/>
            <person name="Stott M.B."/>
            <person name="Li D."/>
            <person name="Zhao G."/>
            <person name="Wu J."/>
            <person name="Galperin M.Y."/>
            <person name="Koonin E.V."/>
            <person name="Makarova K.S."/>
            <person name="Wolf Y.I."/>
            <person name="Rigden D.J."/>
            <person name="Dunfield P.F."/>
            <person name="Wang L."/>
            <person name="Alam M."/>
        </authorList>
    </citation>
    <scope>NUCLEOTIDE SEQUENCE [LARGE SCALE GENOMIC DNA]</scope>
    <source>
        <strain>DSM 21510 / WK1</strain>
    </source>
</reference>
<keyword id="KW-0067">ATP-binding</keyword>
<keyword id="KW-0418">Kinase</keyword>
<keyword id="KW-0460">Magnesium</keyword>
<keyword id="KW-0479">Metal-binding</keyword>
<keyword id="KW-0547">Nucleotide-binding</keyword>
<keyword id="KW-0784">Thiamine biosynthesis</keyword>
<keyword id="KW-0808">Transferase</keyword>